<dbReference type="EMBL" id="M18262">
    <property type="protein sequence ID" value="AAA98067.1"/>
    <property type="molecule type" value="Genomic_DNA"/>
</dbReference>
<dbReference type="PIR" id="S12084">
    <property type="entry name" value="S12084"/>
</dbReference>
<dbReference type="SMR" id="P19755"/>
<protein>
    <recommendedName>
        <fullName>Uncharacterized 5.3 kDa protein</fullName>
    </recommendedName>
    <alternativeName>
        <fullName>ORF 46</fullName>
    </alternativeName>
</protein>
<sequence>MGISPPCYGNWPTLDETVKNVFTCLNFVVVWRVIFNPQRQGSWISC</sequence>
<geneLocation type="plasmid">
    <name>IncN pCU1</name>
</geneLocation>
<proteinExistence type="predicted"/>
<keyword id="KW-0614">Plasmid</keyword>
<name>YPC4_ECOLX</name>
<organism>
    <name type="scientific">Escherichia coli</name>
    <dbReference type="NCBI Taxonomy" id="562"/>
    <lineage>
        <taxon>Bacteria</taxon>
        <taxon>Pseudomonadati</taxon>
        <taxon>Pseudomonadota</taxon>
        <taxon>Gammaproteobacteria</taxon>
        <taxon>Enterobacterales</taxon>
        <taxon>Enterobacteriaceae</taxon>
        <taxon>Escherichia</taxon>
    </lineage>
</organism>
<reference key="1">
    <citation type="journal article" date="1990" name="Gene">
        <title>Mutations within the replicon of the IncN plasmid pCU1 that affect its Escherichia coli polA-independence but not its autonomous replication ability.</title>
        <authorList>
            <person name="Krishnan B.R."/>
            <person name="Fobert P.R."/>
            <person name="Seitzer U."/>
            <person name="Iyer V.N."/>
        </authorList>
    </citation>
    <scope>NUCLEOTIDE SEQUENCE [GENOMIC DNA]</scope>
</reference>
<accession>P19755</accession>
<feature type="chain" id="PRO_0000068535" description="Uncharacterized 5.3 kDa protein">
    <location>
        <begin position="1"/>
        <end position="46"/>
    </location>
</feature>